<feature type="chain" id="PRO_0000268808" description="Small ribosomal subunit protein uS14">
    <location>
        <begin position="1"/>
        <end position="56"/>
    </location>
</feature>
<feature type="binding site" evidence="4">
    <location>
        <position position="21"/>
    </location>
    <ligand>
        <name>Zn(2+)</name>
        <dbReference type="ChEBI" id="CHEBI:29105"/>
    </ligand>
</feature>
<feature type="binding site" evidence="4">
    <location>
        <position position="24"/>
    </location>
    <ligand>
        <name>Zn(2+)</name>
        <dbReference type="ChEBI" id="CHEBI:29105"/>
    </ligand>
</feature>
<feature type="binding site" evidence="4">
    <location>
        <position position="39"/>
    </location>
    <ligand>
        <name>Zn(2+)</name>
        <dbReference type="ChEBI" id="CHEBI:29105"/>
    </ligand>
</feature>
<feature type="binding site" evidence="4">
    <location>
        <position position="42"/>
    </location>
    <ligand>
        <name>Zn(2+)</name>
        <dbReference type="ChEBI" id="CHEBI:29105"/>
    </ligand>
</feature>
<sequence>MGHENIWYSHPRKYGPGSRYCRVCANHHGLIRKYGLNICRRCFRQYAADIGFKKLD</sequence>
<comment type="cofactor">
    <cofactor evidence="1">
        <name>Zn(2+)</name>
        <dbReference type="ChEBI" id="CHEBI:29105"/>
    </cofactor>
    <text evidence="1">Binds 1 zinc ion per subunit.</text>
</comment>
<comment type="subunit">
    <text evidence="3">Component of the 40S small ribosomal subunit.</text>
</comment>
<comment type="subcellular location">
    <subcellularLocation>
        <location evidence="1">Cytoplasm</location>
        <location evidence="1">Cytosol</location>
    </subcellularLocation>
    <subcellularLocation>
        <location evidence="1">Cytoplasm</location>
    </subcellularLocation>
    <subcellularLocation>
        <location evidence="2">Rough endoplasmic reticulum</location>
    </subcellularLocation>
    <text evidence="1 2">Detected on cytosolic polysomes (By similarity). Detected in ribosomes that are associated with the rough endoplasmic reticulum (By similarity).</text>
</comment>
<comment type="similarity">
    <text evidence="5">Belongs to the universal ribosomal protein uS14 family.</text>
</comment>
<protein>
    <recommendedName>
        <fullName evidence="5">Small ribosomal subunit protein uS14</fullName>
    </recommendedName>
    <alternativeName>
        <fullName>40S ribosomal protein S29</fullName>
    </alternativeName>
</protein>
<proteinExistence type="inferred from homology"/>
<evidence type="ECO:0000250" key="1">
    <source>
        <dbReference type="UniProtKB" id="P62273"/>
    </source>
</evidence>
<evidence type="ECO:0000250" key="2">
    <source>
        <dbReference type="UniProtKB" id="Q6QAP6"/>
    </source>
</evidence>
<evidence type="ECO:0000250" key="3">
    <source>
        <dbReference type="UniProtKB" id="Q9VH69"/>
    </source>
</evidence>
<evidence type="ECO:0000255" key="4"/>
<evidence type="ECO:0000305" key="5"/>
<gene>
    <name type="primary">RpS29</name>
</gene>
<accession>Q4PM47</accession>
<name>RS29_IXOSC</name>
<organism>
    <name type="scientific">Ixodes scapularis</name>
    <name type="common">Black-legged tick</name>
    <name type="synonym">Deer tick</name>
    <dbReference type="NCBI Taxonomy" id="6945"/>
    <lineage>
        <taxon>Eukaryota</taxon>
        <taxon>Metazoa</taxon>
        <taxon>Ecdysozoa</taxon>
        <taxon>Arthropoda</taxon>
        <taxon>Chelicerata</taxon>
        <taxon>Arachnida</taxon>
        <taxon>Acari</taxon>
        <taxon>Parasitiformes</taxon>
        <taxon>Ixodida</taxon>
        <taxon>Ixodoidea</taxon>
        <taxon>Ixodidae</taxon>
        <taxon>Ixodinae</taxon>
        <taxon>Ixodes</taxon>
    </lineage>
</organism>
<dbReference type="EMBL" id="DQ066280">
    <property type="protein sequence ID" value="AAY66917.1"/>
    <property type="molecule type" value="mRNA"/>
</dbReference>
<dbReference type="SMR" id="Q4PM47"/>
<dbReference type="FunCoup" id="Q4PM47">
    <property type="interactions" value="859"/>
</dbReference>
<dbReference type="VEuPathDB" id="VectorBase:ISCI019804"/>
<dbReference type="VEuPathDB" id="VectorBase:ISCW019804"/>
<dbReference type="HOGENOM" id="CLU_1733518_0_0_1"/>
<dbReference type="InParanoid" id="Q4PM47"/>
<dbReference type="Proteomes" id="UP000001555">
    <property type="component" value="Unplaced"/>
</dbReference>
<dbReference type="GO" id="GO:0022627">
    <property type="term" value="C:cytosolic small ribosomal subunit"/>
    <property type="evidence" value="ECO:0000250"/>
    <property type="project" value="UniProtKB"/>
</dbReference>
<dbReference type="GO" id="GO:0005840">
    <property type="term" value="C:ribosome"/>
    <property type="evidence" value="ECO:0000250"/>
    <property type="project" value="UniProtKB"/>
</dbReference>
<dbReference type="GO" id="GO:0005791">
    <property type="term" value="C:rough endoplasmic reticulum"/>
    <property type="evidence" value="ECO:0007669"/>
    <property type="project" value="UniProtKB-SubCell"/>
</dbReference>
<dbReference type="GO" id="GO:0003735">
    <property type="term" value="F:structural constituent of ribosome"/>
    <property type="evidence" value="ECO:0000318"/>
    <property type="project" value="GO_Central"/>
</dbReference>
<dbReference type="GO" id="GO:0008270">
    <property type="term" value="F:zinc ion binding"/>
    <property type="evidence" value="ECO:0000250"/>
    <property type="project" value="UniProtKB"/>
</dbReference>
<dbReference type="GO" id="GO:0002181">
    <property type="term" value="P:cytoplasmic translation"/>
    <property type="evidence" value="ECO:0000250"/>
    <property type="project" value="UniProtKB"/>
</dbReference>
<dbReference type="FunFam" id="4.10.830.10:FF:000002">
    <property type="entry name" value="40S ribosomal protein S29"/>
    <property type="match status" value="1"/>
</dbReference>
<dbReference type="Gene3D" id="4.10.830.10">
    <property type="entry name" value="30s Ribosomal Protein S14, Chain N"/>
    <property type="match status" value="1"/>
</dbReference>
<dbReference type="InterPro" id="IPR001209">
    <property type="entry name" value="Ribosomal_uS14"/>
</dbReference>
<dbReference type="InterPro" id="IPR018271">
    <property type="entry name" value="Ribosomal_uS14_CS"/>
</dbReference>
<dbReference type="InterPro" id="IPR039744">
    <property type="entry name" value="RIbosomal_uS14_euk_arc"/>
</dbReference>
<dbReference type="InterPro" id="IPR043140">
    <property type="entry name" value="Ribosomal_uS14_sf"/>
</dbReference>
<dbReference type="NCBIfam" id="NF004424">
    <property type="entry name" value="PRK05766.1"/>
    <property type="match status" value="1"/>
</dbReference>
<dbReference type="PANTHER" id="PTHR12010">
    <property type="entry name" value="40S RIBOSOMAL PROTEIN S29"/>
    <property type="match status" value="1"/>
</dbReference>
<dbReference type="PANTHER" id="PTHR12010:SF2">
    <property type="entry name" value="40S RIBOSOMAL PROTEIN S29"/>
    <property type="match status" value="1"/>
</dbReference>
<dbReference type="Pfam" id="PF00253">
    <property type="entry name" value="Ribosomal_S14"/>
    <property type="match status" value="1"/>
</dbReference>
<dbReference type="PROSITE" id="PS00527">
    <property type="entry name" value="RIBOSOMAL_S14"/>
    <property type="match status" value="1"/>
</dbReference>
<keyword id="KW-0963">Cytoplasm</keyword>
<keyword id="KW-0256">Endoplasmic reticulum</keyword>
<keyword id="KW-0479">Metal-binding</keyword>
<keyword id="KW-1185">Reference proteome</keyword>
<keyword id="KW-0687">Ribonucleoprotein</keyword>
<keyword id="KW-0689">Ribosomal protein</keyword>
<keyword id="KW-0862">Zinc</keyword>
<reference key="1">
    <citation type="journal article" date="2006" name="Insect Biochem. Mol. Biol.">
        <title>An annotated catalog of salivary gland transcripts from Ixodes scapularis ticks.</title>
        <authorList>
            <person name="Ribeiro J.M.C."/>
            <person name="Alarcon-Chaidez F."/>
            <person name="Francischetti I.M.B."/>
            <person name="Mans B.J."/>
            <person name="Mather T.N."/>
            <person name="Valenzuela J.G."/>
            <person name="Wikel S.K."/>
        </authorList>
    </citation>
    <scope>NUCLEOTIDE SEQUENCE [LARGE SCALE MRNA]</scope>
    <source>
        <strain>Is-all-538</strain>
        <tissue>Salivary gland</tissue>
    </source>
</reference>